<keyword id="KW-0325">Glycoprotein</keyword>
<keyword id="KW-0333">Golgi apparatus</keyword>
<keyword id="KW-0472">Membrane</keyword>
<keyword id="KW-1185">Reference proteome</keyword>
<keyword id="KW-0735">Signal-anchor</keyword>
<keyword id="KW-0808">Transferase</keyword>
<keyword id="KW-0812">Transmembrane</keyword>
<keyword id="KW-1133">Transmembrane helix</keyword>
<dbReference type="EC" id="2.4.1.-" evidence="5"/>
<dbReference type="EMBL" id="KY906044">
    <property type="protein sequence ID" value="ARJ31408.1"/>
    <property type="molecule type" value="mRNA"/>
</dbReference>
<dbReference type="EMBL" id="AC021044">
    <property type="protein sequence ID" value="AAF98431.1"/>
    <property type="molecule type" value="Genomic_DNA"/>
</dbReference>
<dbReference type="EMBL" id="CP002684">
    <property type="protein sequence ID" value="AEE30935.1"/>
    <property type="molecule type" value="Genomic_DNA"/>
</dbReference>
<dbReference type="EMBL" id="AY062504">
    <property type="protein sequence ID" value="AAL32582.1"/>
    <property type="molecule type" value="mRNA"/>
</dbReference>
<dbReference type="EMBL" id="BT002091">
    <property type="protein sequence ID" value="AAN72102.1"/>
    <property type="molecule type" value="mRNA"/>
</dbReference>
<dbReference type="PIR" id="E86408">
    <property type="entry name" value="E86408"/>
</dbReference>
<dbReference type="RefSeq" id="NP_174145.1">
    <property type="nucleotide sequence ID" value="NM_102589.4"/>
</dbReference>
<dbReference type="FunCoup" id="Q9FZ97">
    <property type="interactions" value="2045"/>
</dbReference>
<dbReference type="GlyCosmos" id="Q9FZ97">
    <property type="glycosylation" value="9 sites, No reported glycans"/>
</dbReference>
<dbReference type="GlyGen" id="Q9FZ97">
    <property type="glycosylation" value="9 sites"/>
</dbReference>
<dbReference type="iPTMnet" id="Q9FZ97"/>
<dbReference type="PaxDb" id="3702-AT1G28240.1"/>
<dbReference type="ProteomicsDB" id="191694"/>
<dbReference type="EnsemblPlants" id="AT1G28240.1">
    <property type="protein sequence ID" value="AT1G28240.1"/>
    <property type="gene ID" value="AT1G28240"/>
</dbReference>
<dbReference type="GeneID" id="839718"/>
<dbReference type="Gramene" id="AT1G28240.1">
    <property type="protein sequence ID" value="AT1G28240.1"/>
    <property type="gene ID" value="AT1G28240"/>
</dbReference>
<dbReference type="KEGG" id="ath:AT1G28240"/>
<dbReference type="Araport" id="AT1G28240"/>
<dbReference type="TAIR" id="AT1G28240">
    <property type="gene designation" value="MUCI70"/>
</dbReference>
<dbReference type="eggNOG" id="ENOG502QV59">
    <property type="taxonomic scope" value="Eukaryota"/>
</dbReference>
<dbReference type="HOGENOM" id="CLU_027685_2_0_1"/>
<dbReference type="InParanoid" id="Q9FZ97"/>
<dbReference type="OMA" id="KPSKMQK"/>
<dbReference type="PhylomeDB" id="Q9FZ97"/>
<dbReference type="UniPathway" id="UPA00845"/>
<dbReference type="PRO" id="PR:Q9FZ97"/>
<dbReference type="Proteomes" id="UP000006548">
    <property type="component" value="Chromosome 1"/>
</dbReference>
<dbReference type="ExpressionAtlas" id="Q9FZ97">
    <property type="expression patterns" value="baseline and differential"/>
</dbReference>
<dbReference type="GO" id="GO:0005794">
    <property type="term" value="C:Golgi apparatus"/>
    <property type="evidence" value="ECO:0000314"/>
    <property type="project" value="TAIR"/>
</dbReference>
<dbReference type="GO" id="GO:0000139">
    <property type="term" value="C:Golgi membrane"/>
    <property type="evidence" value="ECO:0007669"/>
    <property type="project" value="UniProtKB-SubCell"/>
</dbReference>
<dbReference type="GO" id="GO:0016757">
    <property type="term" value="F:glycosyltransferase activity"/>
    <property type="evidence" value="ECO:0000315"/>
    <property type="project" value="TAIR"/>
</dbReference>
<dbReference type="GO" id="GO:0080001">
    <property type="term" value="P:mucilage extrusion from seed coat"/>
    <property type="evidence" value="ECO:0000315"/>
    <property type="project" value="TAIR"/>
</dbReference>
<dbReference type="GO" id="GO:0048358">
    <property type="term" value="P:mucilage pectin biosynthetic process"/>
    <property type="evidence" value="ECO:0000315"/>
    <property type="project" value="TAIR"/>
</dbReference>
<dbReference type="GO" id="GO:0010246">
    <property type="term" value="P:rhamnogalacturonan I biosynthetic process"/>
    <property type="evidence" value="ECO:0000315"/>
    <property type="project" value="TAIR"/>
</dbReference>
<dbReference type="GO" id="GO:0045491">
    <property type="term" value="P:xylan metabolic process"/>
    <property type="evidence" value="ECO:0000315"/>
    <property type="project" value="UniProtKB"/>
</dbReference>
<dbReference type="InterPro" id="IPR006852">
    <property type="entry name" value="TOD1_MUCI70"/>
</dbReference>
<dbReference type="InterPro" id="IPR048354">
    <property type="entry name" value="TOD1_MUCI70_glycTrfase_dom"/>
</dbReference>
<dbReference type="PANTHER" id="PTHR12956">
    <property type="entry name" value="ALKALINE CERAMIDASE-RELATED"/>
    <property type="match status" value="1"/>
</dbReference>
<dbReference type="PANTHER" id="PTHR12956:SF38">
    <property type="entry name" value="HEXOSYLTRANSFERASE MUCI70-RELATED"/>
    <property type="match status" value="1"/>
</dbReference>
<dbReference type="Pfam" id="PF04765">
    <property type="entry name" value="TOD1_MUCI70"/>
    <property type="match status" value="1"/>
</dbReference>
<gene>
    <name evidence="6" type="primary">MUCI70</name>
    <name evidence="8" type="ordered locus">At1g28240</name>
    <name evidence="9" type="ORF">F3H9.11</name>
</gene>
<feature type="chain" id="PRO_0000450758" description="Probable hexosyltransferase MUCI70">
    <location>
        <begin position="1"/>
        <end position="581"/>
    </location>
</feature>
<feature type="topological domain" description="Cytoplasmic" evidence="7">
    <location>
        <begin position="1"/>
        <end position="58"/>
    </location>
</feature>
<feature type="transmembrane region" description="Helical; Signal-anchor for type II membrane protein" evidence="2">
    <location>
        <begin position="59"/>
        <end position="79"/>
    </location>
</feature>
<feature type="topological domain" description="Lumenal" evidence="7">
    <location>
        <begin position="80"/>
        <end position="581"/>
    </location>
</feature>
<feature type="region of interest" description="Disordered" evidence="4">
    <location>
        <begin position="514"/>
        <end position="581"/>
    </location>
</feature>
<feature type="compositionally biased region" description="Pro residues" evidence="4">
    <location>
        <begin position="520"/>
        <end position="536"/>
    </location>
</feature>
<feature type="compositionally biased region" description="Basic residues" evidence="4">
    <location>
        <begin position="553"/>
        <end position="571"/>
    </location>
</feature>
<feature type="glycosylation site" description="N-linked (GlcNAc...) asparagine" evidence="3">
    <location>
        <position position="96"/>
    </location>
</feature>
<feature type="glycosylation site" description="N-linked (GlcNAc...) asparagine" evidence="3">
    <location>
        <position position="102"/>
    </location>
</feature>
<feature type="glycosylation site" description="N-linked (GlcNAc...) asparagine" evidence="3">
    <location>
        <position position="119"/>
    </location>
</feature>
<feature type="glycosylation site" description="N-linked (GlcNAc...) asparagine" evidence="3">
    <location>
        <position position="194"/>
    </location>
</feature>
<feature type="glycosylation site" description="N-linked (GlcNAc...) asparagine" evidence="3">
    <location>
        <position position="224"/>
    </location>
</feature>
<feature type="glycosylation site" description="N-linked (GlcNAc...) asparagine" evidence="3">
    <location>
        <position position="285"/>
    </location>
</feature>
<feature type="glycosylation site" description="N-linked (GlcNAc...) asparagine" evidence="3">
    <location>
        <position position="382"/>
    </location>
</feature>
<feature type="glycosylation site" description="N-linked (GlcNAc...) asparagine" evidence="3">
    <location>
        <position position="411"/>
    </location>
</feature>
<feature type="glycosylation site" description="N-linked (GlcNAc...) asparagine" evidence="3">
    <location>
        <position position="488"/>
    </location>
</feature>
<feature type="sequence conflict" description="In Ref. 1; ARJ31408 and 4; AAL32582/AAN72102." evidence="7" ref="1 4">
    <original>E</original>
    <variation>G</variation>
    <location>
        <position position="177"/>
    </location>
</feature>
<proteinExistence type="evidence at protein level"/>
<protein>
    <recommendedName>
        <fullName evidence="7">Probable hexosyltransferase MUCI70</fullName>
        <ecNumber evidence="5">2.4.1.-</ecNumber>
    </recommendedName>
    <alternativeName>
        <fullName evidence="6">Protein MUCILAGE-RELATED 70</fullName>
    </alternativeName>
</protein>
<accession>Q9FZ97</accession>
<accession>Q8W4K7</accession>
<sequence>MTGLGVRSSSYGSLEKTGLNGVVLPIQITTTTRTKPSKMQKDREGIVHWICKFAGRKKVGMLLLFLISAVVFLRVLYVGKGEDSQEGQGPPSLHFNGSSGVNYSNMLQTNEELNMNIGNISFKAKEVIVFPPPPIHFLGYSLPQGHPCNSFTLPPPPADRKRTGPRPCPVCYLPVEEAVALMPNAPSFSPVLKNLTYIYEEPLNRETEFGGSDFGGYPTLKHRNDSFDIKETMSVHCGFVKGPQPGRNTGFDIDEADLLEMKQCRGIVVASAVFDAFDDVKAPQNISKYAEETVCFYMFVDEETESILKRERGLDGNKKVGIWRVVVVHNLPYSDGRRNGKVPKLLVHRMFPNARYSLWIDGKLELVVDPYQILERFLWRKNATFAISRHYKRFDVLVEAEANKAAGKYDNASIDFQVDFYKNEGLTPYSVAKLPITSDVPEGCVILREHVPISNLFTCLWFNEVDRFTSRDQISFSTVRDKIAAKTNWTVSMFLDCERRNFVVQRYHRAEQERFARQRPPVPNFPPPPPSPPPPVLISSDLPRKMSSGRATPPRRRGRDRRSGQRGHRKANLPVRLPDSA</sequence>
<organism>
    <name type="scientific">Arabidopsis thaliana</name>
    <name type="common">Mouse-ear cress</name>
    <dbReference type="NCBI Taxonomy" id="3702"/>
    <lineage>
        <taxon>Eukaryota</taxon>
        <taxon>Viridiplantae</taxon>
        <taxon>Streptophyta</taxon>
        <taxon>Embryophyta</taxon>
        <taxon>Tracheophyta</taxon>
        <taxon>Spermatophyta</taxon>
        <taxon>Magnoliopsida</taxon>
        <taxon>eudicotyledons</taxon>
        <taxon>Gunneridae</taxon>
        <taxon>Pentapetalae</taxon>
        <taxon>rosids</taxon>
        <taxon>malvids</taxon>
        <taxon>Brassicales</taxon>
        <taxon>Brassicaceae</taxon>
        <taxon>Camelineae</taxon>
        <taxon>Arabidopsis</taxon>
    </lineage>
</organism>
<evidence type="ECO:0000250" key="1">
    <source>
        <dbReference type="UniProtKB" id="Q9LE59"/>
    </source>
</evidence>
<evidence type="ECO:0000255" key="2"/>
<evidence type="ECO:0000255" key="3">
    <source>
        <dbReference type="PROSITE-ProRule" id="PRU00498"/>
    </source>
</evidence>
<evidence type="ECO:0000256" key="4">
    <source>
        <dbReference type="SAM" id="MobiDB-lite"/>
    </source>
</evidence>
<evidence type="ECO:0000269" key="5">
    <source>
    </source>
</evidence>
<evidence type="ECO:0000303" key="6">
    <source>
    </source>
</evidence>
<evidence type="ECO:0000305" key="7"/>
<evidence type="ECO:0000312" key="8">
    <source>
        <dbReference type="Araport" id="AT1G28240"/>
    </source>
</evidence>
<evidence type="ECO:0000312" key="9">
    <source>
        <dbReference type="EMBL" id="AAF98431.1"/>
    </source>
</evidence>
<reference key="1">
    <citation type="submission" date="2017-04" db="EMBL/GenBank/DDBJ databases">
        <title>Arabidopsis glycosyltransfereases: an update.</title>
        <authorList>
            <person name="Zeng W."/>
            <person name="Gluza P."/>
            <person name="Heazlewood J."/>
        </authorList>
    </citation>
    <scope>NUCLEOTIDE SEQUENCE [MRNA]</scope>
    <source>
        <strain>cv. Columbia</strain>
    </source>
</reference>
<reference key="2">
    <citation type="journal article" date="2000" name="Nature">
        <title>Sequence and analysis of chromosome 1 of the plant Arabidopsis thaliana.</title>
        <authorList>
            <person name="Theologis A."/>
            <person name="Ecker J.R."/>
            <person name="Palm C.J."/>
            <person name="Federspiel N.A."/>
            <person name="Kaul S."/>
            <person name="White O."/>
            <person name="Alonso J."/>
            <person name="Altafi H."/>
            <person name="Araujo R."/>
            <person name="Bowman C.L."/>
            <person name="Brooks S.Y."/>
            <person name="Buehler E."/>
            <person name="Chan A."/>
            <person name="Chao Q."/>
            <person name="Chen H."/>
            <person name="Cheuk R.F."/>
            <person name="Chin C.W."/>
            <person name="Chung M.K."/>
            <person name="Conn L."/>
            <person name="Conway A.B."/>
            <person name="Conway A.R."/>
            <person name="Creasy T.H."/>
            <person name="Dewar K."/>
            <person name="Dunn P."/>
            <person name="Etgu P."/>
            <person name="Feldblyum T.V."/>
            <person name="Feng J.-D."/>
            <person name="Fong B."/>
            <person name="Fujii C.Y."/>
            <person name="Gill J.E."/>
            <person name="Goldsmith A.D."/>
            <person name="Haas B."/>
            <person name="Hansen N.F."/>
            <person name="Hughes B."/>
            <person name="Huizar L."/>
            <person name="Hunter J.L."/>
            <person name="Jenkins J."/>
            <person name="Johnson-Hopson C."/>
            <person name="Khan S."/>
            <person name="Khaykin E."/>
            <person name="Kim C.J."/>
            <person name="Koo H.L."/>
            <person name="Kremenetskaia I."/>
            <person name="Kurtz D.B."/>
            <person name="Kwan A."/>
            <person name="Lam B."/>
            <person name="Langin-Hooper S."/>
            <person name="Lee A."/>
            <person name="Lee J.M."/>
            <person name="Lenz C.A."/>
            <person name="Li J.H."/>
            <person name="Li Y.-P."/>
            <person name="Lin X."/>
            <person name="Liu S.X."/>
            <person name="Liu Z.A."/>
            <person name="Luros J.S."/>
            <person name="Maiti R."/>
            <person name="Marziali A."/>
            <person name="Militscher J."/>
            <person name="Miranda M."/>
            <person name="Nguyen M."/>
            <person name="Nierman W.C."/>
            <person name="Osborne B.I."/>
            <person name="Pai G."/>
            <person name="Peterson J."/>
            <person name="Pham P.K."/>
            <person name="Rizzo M."/>
            <person name="Rooney T."/>
            <person name="Rowley D."/>
            <person name="Sakano H."/>
            <person name="Salzberg S.L."/>
            <person name="Schwartz J.R."/>
            <person name="Shinn P."/>
            <person name="Southwick A.M."/>
            <person name="Sun H."/>
            <person name="Tallon L.J."/>
            <person name="Tambunga G."/>
            <person name="Toriumi M.J."/>
            <person name="Town C.D."/>
            <person name="Utterback T."/>
            <person name="Van Aken S."/>
            <person name="Vaysberg M."/>
            <person name="Vysotskaia V.S."/>
            <person name="Walker M."/>
            <person name="Wu D."/>
            <person name="Yu G."/>
            <person name="Fraser C.M."/>
            <person name="Venter J.C."/>
            <person name="Davis R.W."/>
        </authorList>
    </citation>
    <scope>NUCLEOTIDE SEQUENCE [LARGE SCALE GENOMIC DNA]</scope>
    <source>
        <strain>cv. Columbia</strain>
    </source>
</reference>
<reference key="3">
    <citation type="journal article" date="2017" name="Plant J.">
        <title>Araport11: a complete reannotation of the Arabidopsis thaliana reference genome.</title>
        <authorList>
            <person name="Cheng C.Y."/>
            <person name="Krishnakumar V."/>
            <person name="Chan A.P."/>
            <person name="Thibaud-Nissen F."/>
            <person name="Schobel S."/>
            <person name="Town C.D."/>
        </authorList>
    </citation>
    <scope>GENOME REANNOTATION</scope>
    <source>
        <strain>cv. Columbia</strain>
    </source>
</reference>
<reference key="4">
    <citation type="journal article" date="2003" name="Science">
        <title>Empirical analysis of transcriptional activity in the Arabidopsis genome.</title>
        <authorList>
            <person name="Yamada K."/>
            <person name="Lim J."/>
            <person name="Dale J.M."/>
            <person name="Chen H."/>
            <person name="Shinn P."/>
            <person name="Palm C.J."/>
            <person name="Southwick A.M."/>
            <person name="Wu H.C."/>
            <person name="Kim C.J."/>
            <person name="Nguyen M."/>
            <person name="Pham P.K."/>
            <person name="Cheuk R.F."/>
            <person name="Karlin-Newmann G."/>
            <person name="Liu S.X."/>
            <person name="Lam B."/>
            <person name="Sakano H."/>
            <person name="Wu T."/>
            <person name="Yu G."/>
            <person name="Miranda M."/>
            <person name="Quach H.L."/>
            <person name="Tripp M."/>
            <person name="Chang C.H."/>
            <person name="Lee J.M."/>
            <person name="Toriumi M.J."/>
            <person name="Chan M.M."/>
            <person name="Tang C.C."/>
            <person name="Onodera C.S."/>
            <person name="Deng J.M."/>
            <person name="Akiyama K."/>
            <person name="Ansari Y."/>
            <person name="Arakawa T."/>
            <person name="Banh J."/>
            <person name="Banno F."/>
            <person name="Bowser L."/>
            <person name="Brooks S.Y."/>
            <person name="Carninci P."/>
            <person name="Chao Q."/>
            <person name="Choy N."/>
            <person name="Enju A."/>
            <person name="Goldsmith A.D."/>
            <person name="Gurjal M."/>
            <person name="Hansen N.F."/>
            <person name="Hayashizaki Y."/>
            <person name="Johnson-Hopson C."/>
            <person name="Hsuan V.W."/>
            <person name="Iida K."/>
            <person name="Karnes M."/>
            <person name="Khan S."/>
            <person name="Koesema E."/>
            <person name="Ishida J."/>
            <person name="Jiang P.X."/>
            <person name="Jones T."/>
            <person name="Kawai J."/>
            <person name="Kamiya A."/>
            <person name="Meyers C."/>
            <person name="Nakajima M."/>
            <person name="Narusaka M."/>
            <person name="Seki M."/>
            <person name="Sakurai T."/>
            <person name="Satou M."/>
            <person name="Tamse R."/>
            <person name="Vaysberg M."/>
            <person name="Wallender E.K."/>
            <person name="Wong C."/>
            <person name="Yamamura Y."/>
            <person name="Yuan S."/>
            <person name="Shinozaki K."/>
            <person name="Davis R.W."/>
            <person name="Theologis A."/>
            <person name="Ecker J.R."/>
        </authorList>
    </citation>
    <scope>NUCLEOTIDE SEQUENCE [LARGE SCALE MRNA]</scope>
    <source>
        <strain>cv. Columbia</strain>
    </source>
</reference>
<reference key="5">
    <citation type="journal article" date="2018" name="Plant Physiol.">
        <title>Identification of key enzymes for pectin synthesis in seed mucilage.</title>
        <authorList>
            <person name="Voiniciuc C."/>
            <person name="Engle K.A."/>
            <person name="Guenl M."/>
            <person name="Dieluweit S."/>
            <person name="Schmidt M.H."/>
            <person name="Yang J.Y."/>
            <person name="Moremen K.W."/>
            <person name="Mohnen D."/>
            <person name="Usadel B."/>
        </authorList>
    </citation>
    <scope>FUNCTION</scope>
    <scope>DISRUPTION PHENOTYPE</scope>
    <scope>SUBCELLULAR LOCATION</scope>
    <scope>CATALYTIC ACTIVITY</scope>
    <scope>PATHWAY</scope>
    <scope>TISSUE SPECIFICITY</scope>
    <scope>DEVELOPMENTAL STAGE</scope>
</reference>
<name>MUC70_ARATH</name>
<comment type="function">
    <text evidence="1 5">Probable glycosyltransferase involved in pectin and/or xylans biosynthesis in cell walls (By similarity). Together with IRX14, required for xylan and pectin synthesis in seed coat epidermal (SCE) cells (PubMed:30228108). Collaboratively with GAUT11, essential for the accumulation of seed mucilage, a gelatinous wall rich in unbranched rhamnogalacturonan I (RG I), and for shaping the surface morphology of seeds (PubMed:30228108).</text>
</comment>
<comment type="pathway">
    <text evidence="5">Glycan metabolism; pectin biosynthesis.</text>
</comment>
<comment type="subcellular location">
    <subcellularLocation>
        <location evidence="5">Golgi apparatus membrane</location>
        <topology evidence="2">Single-pass type II membrane protein</topology>
    </subcellularLocation>
</comment>
<comment type="tissue specificity">
    <text evidence="5">Expressed in siliques and seeds.</text>
</comment>
<comment type="developmental stage">
    <text evidence="5">Accumulates in developing seeds in siliques, mainly in the seed coat and, to a lesser extent, in the embryo.</text>
</comment>
<comment type="disruption phenotype">
    <text evidence="5">Strong reduction of seed mucilage accumulation and major decrease in rhamnogalacturonan I (RG I), associated with reduced absolute levels of rhamnose (Rha), arabinose (Ara) and galacturonic acid (GalA) but increased absolute abundance of minor sugars (e.g. galactose (Gal), xylose (Xyl), glucose (Glc) and mannose (Man)) (PubMed:30228108). The double mutant muci70-1 gaut11-3 is completely defective in seed mucilage production and exhibits a strong release of minor sugars in total mucilage extracts (PubMed:30228108). Plants missing both MUCI70 and IRX14 exhibit a severe reduction in both xylan- and pectin-related sugars in total seed mucilage extracts (PubMed:30228108).</text>
</comment>
<comment type="similarity">
    <text evidence="7">Belongs to the glycosyltransferase 8 family.</text>
</comment>